<reference key="1">
    <citation type="journal article" date="2001" name="Nature">
        <title>Massive gene decay in the leprosy bacillus.</title>
        <authorList>
            <person name="Cole S.T."/>
            <person name="Eiglmeier K."/>
            <person name="Parkhill J."/>
            <person name="James K.D."/>
            <person name="Thomson N.R."/>
            <person name="Wheeler P.R."/>
            <person name="Honore N."/>
            <person name="Garnier T."/>
            <person name="Churcher C.M."/>
            <person name="Harris D.E."/>
            <person name="Mungall K.L."/>
            <person name="Basham D."/>
            <person name="Brown D."/>
            <person name="Chillingworth T."/>
            <person name="Connor R."/>
            <person name="Davies R.M."/>
            <person name="Devlin K."/>
            <person name="Duthoy S."/>
            <person name="Feltwell T."/>
            <person name="Fraser A."/>
            <person name="Hamlin N."/>
            <person name="Holroyd S."/>
            <person name="Hornsby T."/>
            <person name="Jagels K."/>
            <person name="Lacroix C."/>
            <person name="Maclean J."/>
            <person name="Moule S."/>
            <person name="Murphy L.D."/>
            <person name="Oliver K."/>
            <person name="Quail M.A."/>
            <person name="Rajandream M.A."/>
            <person name="Rutherford K.M."/>
            <person name="Rutter S."/>
            <person name="Seeger K."/>
            <person name="Simon S."/>
            <person name="Simmonds M."/>
            <person name="Skelton J."/>
            <person name="Squares R."/>
            <person name="Squares S."/>
            <person name="Stevens K."/>
            <person name="Taylor K."/>
            <person name="Whitehead S."/>
            <person name="Woodward J.R."/>
            <person name="Barrell B.G."/>
        </authorList>
    </citation>
    <scope>NUCLEOTIDE SEQUENCE [LARGE SCALE GENOMIC DNA]</scope>
    <source>
        <strain>TN</strain>
    </source>
</reference>
<evidence type="ECO:0000255" key="1">
    <source>
        <dbReference type="HAMAP-Rule" id="MF_02019"/>
    </source>
</evidence>
<comment type="function">
    <text evidence="1">Involved in cell wall formation. Catalyzes the final step in the synthesis of UDP-N-acetylmuramoyl-pentapeptide, the precursor of murein.</text>
</comment>
<comment type="catalytic activity">
    <reaction evidence="1">
        <text>D-alanyl-D-alanine + UDP-N-acetyl-alpha-D-muramoyl-L-alanyl-gamma-D-glutamyl-meso-2,6-diaminopimelate + ATP = UDP-N-acetyl-alpha-D-muramoyl-L-alanyl-gamma-D-glutamyl-meso-2,6-diaminopimeloyl-D-alanyl-D-alanine + ADP + phosphate + H(+)</text>
        <dbReference type="Rhea" id="RHEA:28374"/>
        <dbReference type="ChEBI" id="CHEBI:15378"/>
        <dbReference type="ChEBI" id="CHEBI:30616"/>
        <dbReference type="ChEBI" id="CHEBI:43474"/>
        <dbReference type="ChEBI" id="CHEBI:57822"/>
        <dbReference type="ChEBI" id="CHEBI:61386"/>
        <dbReference type="ChEBI" id="CHEBI:83905"/>
        <dbReference type="ChEBI" id="CHEBI:456216"/>
        <dbReference type="EC" id="6.3.2.10"/>
    </reaction>
</comment>
<comment type="pathway">
    <text evidence="1">Cell wall biogenesis; peptidoglycan biosynthesis.</text>
</comment>
<comment type="subcellular location">
    <subcellularLocation>
        <location evidence="1">Cytoplasm</location>
    </subcellularLocation>
</comment>
<comment type="similarity">
    <text evidence="1">Belongs to the MurCDEF family. MurF subfamily.</text>
</comment>
<gene>
    <name evidence="1" type="primary">murF</name>
    <name type="ordered locus">ML0910</name>
    <name type="ORF">MLCB268.06c</name>
</gene>
<organism>
    <name type="scientific">Mycobacterium leprae (strain TN)</name>
    <dbReference type="NCBI Taxonomy" id="272631"/>
    <lineage>
        <taxon>Bacteria</taxon>
        <taxon>Bacillati</taxon>
        <taxon>Actinomycetota</taxon>
        <taxon>Actinomycetes</taxon>
        <taxon>Mycobacteriales</taxon>
        <taxon>Mycobacteriaceae</taxon>
        <taxon>Mycobacterium</taxon>
    </lineage>
</organism>
<proteinExistence type="inferred from homology"/>
<sequence>MIDLTVARVTEIVGGALVDISPEEAAERRVTGSVEFDSRAVGPGGLFLALPGARSDGHDHAASAIAAGAVAVLAARPVGVPAIVVAPDPRTGDGGLTGVLEHDADGSGAAVLAALAKLAKAVAAELVAGGLTIIGITGSSGKTSTKDLVAVVLELLGEVVAPPESFNNELGHPWTVLRATRSTDYLILEMSARRPGNIAALAAIAPPKIGVVLNVGTAHLGEFGSREAIARTKTELPQAIMQSGVVILNVDDPAVAAMADATVARVIRVSRGSYSHPGSPNSPDVWTGPVSLDELARPRFTLHTRDPRAGATEIQLGVYGDHQVANALCAAAVGLECGASVEEVAVALAATGPVSRHRMQVTTRADGVTVIDDTYNANPDSMRAGLQALAWIAHGGTHDKNQPGSCARRSWAVLGEMAELGEDSITEHDRIGRLAVRLDVSRLVVVGGGRSINAMHRGAVMEGSWGLETVNVADPAAALTLLRAEVRPGDVVLIKASHSVGLGALADVLVGDGAIRP</sequence>
<feature type="chain" id="PRO_0000101700" description="UDP-N-acetylmuramoyl-tripeptide--D-alanyl-D-alanine ligase">
    <location>
        <begin position="1"/>
        <end position="517"/>
    </location>
</feature>
<feature type="binding site" evidence="1">
    <location>
        <begin position="138"/>
        <end position="144"/>
    </location>
    <ligand>
        <name>ATP</name>
        <dbReference type="ChEBI" id="CHEBI:30616"/>
    </ligand>
</feature>
<protein>
    <recommendedName>
        <fullName evidence="1">UDP-N-acetylmuramoyl-tripeptide--D-alanyl-D-alanine ligase</fullName>
        <ecNumber evidence="1">6.3.2.10</ecNumber>
    </recommendedName>
    <alternativeName>
        <fullName evidence="1">D-alanyl-D-alanine-adding enzyme</fullName>
    </alternativeName>
    <alternativeName>
        <fullName>UDP-MurNAc-pentapeptide synthetase</fullName>
    </alternativeName>
</protein>
<accession>O69556</accession>
<name>MURF_MYCLE</name>
<keyword id="KW-0067">ATP-binding</keyword>
<keyword id="KW-0131">Cell cycle</keyword>
<keyword id="KW-0132">Cell division</keyword>
<keyword id="KW-0133">Cell shape</keyword>
<keyword id="KW-0961">Cell wall biogenesis/degradation</keyword>
<keyword id="KW-0963">Cytoplasm</keyword>
<keyword id="KW-0436">Ligase</keyword>
<keyword id="KW-0547">Nucleotide-binding</keyword>
<keyword id="KW-0573">Peptidoglycan synthesis</keyword>
<keyword id="KW-1185">Reference proteome</keyword>
<dbReference type="EC" id="6.3.2.10" evidence="1"/>
<dbReference type="EMBL" id="AL022602">
    <property type="protein sequence ID" value="CAA18672.1"/>
    <property type="molecule type" value="Genomic_DNA"/>
</dbReference>
<dbReference type="EMBL" id="AL583920">
    <property type="protein sequence ID" value="CAC31291.1"/>
    <property type="molecule type" value="Genomic_DNA"/>
</dbReference>
<dbReference type="PIR" id="H87022">
    <property type="entry name" value="H87022"/>
</dbReference>
<dbReference type="RefSeq" id="NP_301693.1">
    <property type="nucleotide sequence ID" value="NC_002677.1"/>
</dbReference>
<dbReference type="RefSeq" id="WP_010908017.1">
    <property type="nucleotide sequence ID" value="NC_002677.1"/>
</dbReference>
<dbReference type="SMR" id="O69556"/>
<dbReference type="STRING" id="272631.gene:17574736"/>
<dbReference type="KEGG" id="mle:ML0910"/>
<dbReference type="PATRIC" id="fig|272631.5.peg.1653"/>
<dbReference type="Leproma" id="ML0910"/>
<dbReference type="eggNOG" id="COG0770">
    <property type="taxonomic scope" value="Bacteria"/>
</dbReference>
<dbReference type="HOGENOM" id="CLU_031507_0_0_11"/>
<dbReference type="OrthoDB" id="9800958at2"/>
<dbReference type="UniPathway" id="UPA00219"/>
<dbReference type="Proteomes" id="UP000000806">
    <property type="component" value="Chromosome"/>
</dbReference>
<dbReference type="GO" id="GO:0005737">
    <property type="term" value="C:cytoplasm"/>
    <property type="evidence" value="ECO:0007669"/>
    <property type="project" value="UniProtKB-SubCell"/>
</dbReference>
<dbReference type="GO" id="GO:0005524">
    <property type="term" value="F:ATP binding"/>
    <property type="evidence" value="ECO:0007669"/>
    <property type="project" value="UniProtKB-UniRule"/>
</dbReference>
<dbReference type="GO" id="GO:0047480">
    <property type="term" value="F:UDP-N-acetylmuramoyl-tripeptide-D-alanyl-D-alanine ligase activity"/>
    <property type="evidence" value="ECO:0007669"/>
    <property type="project" value="UniProtKB-UniRule"/>
</dbReference>
<dbReference type="GO" id="GO:0008766">
    <property type="term" value="F:UDP-N-acetylmuramoylalanyl-D-glutamyl-2,6-diaminopimelate-D-alanyl-D-alanine ligase activity"/>
    <property type="evidence" value="ECO:0007669"/>
    <property type="project" value="RHEA"/>
</dbReference>
<dbReference type="GO" id="GO:0051301">
    <property type="term" value="P:cell division"/>
    <property type="evidence" value="ECO:0007669"/>
    <property type="project" value="UniProtKB-KW"/>
</dbReference>
<dbReference type="GO" id="GO:0071555">
    <property type="term" value="P:cell wall organization"/>
    <property type="evidence" value="ECO:0007669"/>
    <property type="project" value="UniProtKB-KW"/>
</dbReference>
<dbReference type="GO" id="GO:0009252">
    <property type="term" value="P:peptidoglycan biosynthetic process"/>
    <property type="evidence" value="ECO:0007669"/>
    <property type="project" value="UniProtKB-UniRule"/>
</dbReference>
<dbReference type="GO" id="GO:0008360">
    <property type="term" value="P:regulation of cell shape"/>
    <property type="evidence" value="ECO:0007669"/>
    <property type="project" value="UniProtKB-KW"/>
</dbReference>
<dbReference type="Gene3D" id="3.90.190.20">
    <property type="entry name" value="Mur ligase, C-terminal domain"/>
    <property type="match status" value="1"/>
</dbReference>
<dbReference type="Gene3D" id="3.40.1190.10">
    <property type="entry name" value="Mur-like, catalytic domain"/>
    <property type="match status" value="1"/>
</dbReference>
<dbReference type="Gene3D" id="3.40.1390.10">
    <property type="entry name" value="MurE/MurF, N-terminal domain"/>
    <property type="match status" value="1"/>
</dbReference>
<dbReference type="HAMAP" id="MF_02019">
    <property type="entry name" value="MurF"/>
    <property type="match status" value="1"/>
</dbReference>
<dbReference type="InterPro" id="IPR036565">
    <property type="entry name" value="Mur-like_cat_sf"/>
</dbReference>
<dbReference type="InterPro" id="IPR004101">
    <property type="entry name" value="Mur_ligase_C"/>
</dbReference>
<dbReference type="InterPro" id="IPR036615">
    <property type="entry name" value="Mur_ligase_C_dom_sf"/>
</dbReference>
<dbReference type="InterPro" id="IPR013221">
    <property type="entry name" value="Mur_ligase_cen"/>
</dbReference>
<dbReference type="InterPro" id="IPR000713">
    <property type="entry name" value="Mur_ligase_N"/>
</dbReference>
<dbReference type="InterPro" id="IPR051046">
    <property type="entry name" value="MurCDEF_CellWall_CoF430Synth"/>
</dbReference>
<dbReference type="InterPro" id="IPR035911">
    <property type="entry name" value="MurE/MurF_N"/>
</dbReference>
<dbReference type="InterPro" id="IPR005863">
    <property type="entry name" value="UDP-N-AcMur_synth"/>
</dbReference>
<dbReference type="NCBIfam" id="TIGR01143">
    <property type="entry name" value="murF"/>
    <property type="match status" value="1"/>
</dbReference>
<dbReference type="PANTHER" id="PTHR43024">
    <property type="entry name" value="UDP-N-ACETYLMURAMOYL-TRIPEPTIDE--D-ALANYL-D-ALANINE LIGASE"/>
    <property type="match status" value="1"/>
</dbReference>
<dbReference type="PANTHER" id="PTHR43024:SF1">
    <property type="entry name" value="UDP-N-ACETYLMURAMOYL-TRIPEPTIDE--D-ALANYL-D-ALANINE LIGASE"/>
    <property type="match status" value="1"/>
</dbReference>
<dbReference type="Pfam" id="PF01225">
    <property type="entry name" value="Mur_ligase"/>
    <property type="match status" value="1"/>
</dbReference>
<dbReference type="Pfam" id="PF02875">
    <property type="entry name" value="Mur_ligase_C"/>
    <property type="match status" value="1"/>
</dbReference>
<dbReference type="Pfam" id="PF08245">
    <property type="entry name" value="Mur_ligase_M"/>
    <property type="match status" value="1"/>
</dbReference>
<dbReference type="SUPFAM" id="SSF53623">
    <property type="entry name" value="MurD-like peptide ligases, catalytic domain"/>
    <property type="match status" value="1"/>
</dbReference>
<dbReference type="SUPFAM" id="SSF53244">
    <property type="entry name" value="MurD-like peptide ligases, peptide-binding domain"/>
    <property type="match status" value="1"/>
</dbReference>
<dbReference type="SUPFAM" id="SSF63418">
    <property type="entry name" value="MurE/MurF N-terminal domain"/>
    <property type="match status" value="1"/>
</dbReference>